<evidence type="ECO:0000250" key="1">
    <source>
        <dbReference type="UniProtKB" id="P15289"/>
    </source>
</evidence>
<evidence type="ECO:0000250" key="2">
    <source>
        <dbReference type="UniProtKB" id="Q8IWU5"/>
    </source>
</evidence>
<evidence type="ECO:0000250" key="3">
    <source>
        <dbReference type="UniProtKB" id="Q8VI60"/>
    </source>
</evidence>
<evidence type="ECO:0000255" key="4"/>
<evidence type="ECO:0000256" key="5">
    <source>
        <dbReference type="SAM" id="MobiDB-lite"/>
    </source>
</evidence>
<evidence type="ECO:0000269" key="6">
    <source>
    </source>
</evidence>
<evidence type="ECO:0000303" key="7">
    <source>
    </source>
</evidence>
<evidence type="ECO:0000305" key="8"/>
<proteinExistence type="evidence at protein level"/>
<reference key="1">
    <citation type="journal article" date="2002" name="J. Biol. Chem.">
        <title>Cloning and characterization of two extracellular heparin-degrading endosulfatases in mice and humans.</title>
        <authorList>
            <person name="Morimoto-Tomita M."/>
            <person name="Uchimura K."/>
            <person name="Werb Z."/>
            <person name="Hemmerich S."/>
            <person name="Rosen S.D."/>
        </authorList>
    </citation>
    <scope>NUCLEOTIDE SEQUENCE [MRNA]</scope>
    <scope>SUBCELLULAR LOCATION</scope>
    <scope>PROTEOLYTIC CLEAVAGE</scope>
    <source>
        <tissue>Mammary tumor</tissue>
    </source>
</reference>
<reference key="2">
    <citation type="journal article" date="2005" name="Science">
        <title>The transcriptional landscape of the mammalian genome.</title>
        <authorList>
            <person name="Carninci P."/>
            <person name="Kasukawa T."/>
            <person name="Katayama S."/>
            <person name="Gough J."/>
            <person name="Frith M.C."/>
            <person name="Maeda N."/>
            <person name="Oyama R."/>
            <person name="Ravasi T."/>
            <person name="Lenhard B."/>
            <person name="Wells C."/>
            <person name="Kodzius R."/>
            <person name="Shimokawa K."/>
            <person name="Bajic V.B."/>
            <person name="Brenner S.E."/>
            <person name="Batalov S."/>
            <person name="Forrest A.R."/>
            <person name="Zavolan M."/>
            <person name="Davis M.J."/>
            <person name="Wilming L.G."/>
            <person name="Aidinis V."/>
            <person name="Allen J.E."/>
            <person name="Ambesi-Impiombato A."/>
            <person name="Apweiler R."/>
            <person name="Aturaliya R.N."/>
            <person name="Bailey T.L."/>
            <person name="Bansal M."/>
            <person name="Baxter L."/>
            <person name="Beisel K.W."/>
            <person name="Bersano T."/>
            <person name="Bono H."/>
            <person name="Chalk A.M."/>
            <person name="Chiu K.P."/>
            <person name="Choudhary V."/>
            <person name="Christoffels A."/>
            <person name="Clutterbuck D.R."/>
            <person name="Crowe M.L."/>
            <person name="Dalla E."/>
            <person name="Dalrymple B.P."/>
            <person name="de Bono B."/>
            <person name="Della Gatta G."/>
            <person name="di Bernardo D."/>
            <person name="Down T."/>
            <person name="Engstrom P."/>
            <person name="Fagiolini M."/>
            <person name="Faulkner G."/>
            <person name="Fletcher C.F."/>
            <person name="Fukushima T."/>
            <person name="Furuno M."/>
            <person name="Futaki S."/>
            <person name="Gariboldi M."/>
            <person name="Georgii-Hemming P."/>
            <person name="Gingeras T.R."/>
            <person name="Gojobori T."/>
            <person name="Green R.E."/>
            <person name="Gustincich S."/>
            <person name="Harbers M."/>
            <person name="Hayashi Y."/>
            <person name="Hensch T.K."/>
            <person name="Hirokawa N."/>
            <person name="Hill D."/>
            <person name="Huminiecki L."/>
            <person name="Iacono M."/>
            <person name="Ikeo K."/>
            <person name="Iwama A."/>
            <person name="Ishikawa T."/>
            <person name="Jakt M."/>
            <person name="Kanapin A."/>
            <person name="Katoh M."/>
            <person name="Kawasawa Y."/>
            <person name="Kelso J."/>
            <person name="Kitamura H."/>
            <person name="Kitano H."/>
            <person name="Kollias G."/>
            <person name="Krishnan S.P."/>
            <person name="Kruger A."/>
            <person name="Kummerfeld S.K."/>
            <person name="Kurochkin I.V."/>
            <person name="Lareau L.F."/>
            <person name="Lazarevic D."/>
            <person name="Lipovich L."/>
            <person name="Liu J."/>
            <person name="Liuni S."/>
            <person name="McWilliam S."/>
            <person name="Madan Babu M."/>
            <person name="Madera M."/>
            <person name="Marchionni L."/>
            <person name="Matsuda H."/>
            <person name="Matsuzawa S."/>
            <person name="Miki H."/>
            <person name="Mignone F."/>
            <person name="Miyake S."/>
            <person name="Morris K."/>
            <person name="Mottagui-Tabar S."/>
            <person name="Mulder N."/>
            <person name="Nakano N."/>
            <person name="Nakauchi H."/>
            <person name="Ng P."/>
            <person name="Nilsson R."/>
            <person name="Nishiguchi S."/>
            <person name="Nishikawa S."/>
            <person name="Nori F."/>
            <person name="Ohara O."/>
            <person name="Okazaki Y."/>
            <person name="Orlando V."/>
            <person name="Pang K.C."/>
            <person name="Pavan W.J."/>
            <person name="Pavesi G."/>
            <person name="Pesole G."/>
            <person name="Petrovsky N."/>
            <person name="Piazza S."/>
            <person name="Reed J."/>
            <person name="Reid J.F."/>
            <person name="Ring B.Z."/>
            <person name="Ringwald M."/>
            <person name="Rost B."/>
            <person name="Ruan Y."/>
            <person name="Salzberg S.L."/>
            <person name="Sandelin A."/>
            <person name="Schneider C."/>
            <person name="Schoenbach C."/>
            <person name="Sekiguchi K."/>
            <person name="Semple C.A."/>
            <person name="Seno S."/>
            <person name="Sessa L."/>
            <person name="Sheng Y."/>
            <person name="Shibata Y."/>
            <person name="Shimada H."/>
            <person name="Shimada K."/>
            <person name="Silva D."/>
            <person name="Sinclair B."/>
            <person name="Sperling S."/>
            <person name="Stupka E."/>
            <person name="Sugiura K."/>
            <person name="Sultana R."/>
            <person name="Takenaka Y."/>
            <person name="Taki K."/>
            <person name="Tammoja K."/>
            <person name="Tan S.L."/>
            <person name="Tang S."/>
            <person name="Taylor M.S."/>
            <person name="Tegner J."/>
            <person name="Teichmann S.A."/>
            <person name="Ueda H.R."/>
            <person name="van Nimwegen E."/>
            <person name="Verardo R."/>
            <person name="Wei C.L."/>
            <person name="Yagi K."/>
            <person name="Yamanishi H."/>
            <person name="Zabarovsky E."/>
            <person name="Zhu S."/>
            <person name="Zimmer A."/>
            <person name="Hide W."/>
            <person name="Bult C."/>
            <person name="Grimmond S.M."/>
            <person name="Teasdale R.D."/>
            <person name="Liu E.T."/>
            <person name="Brusic V."/>
            <person name="Quackenbush J."/>
            <person name="Wahlestedt C."/>
            <person name="Mattick J.S."/>
            <person name="Hume D.A."/>
            <person name="Kai C."/>
            <person name="Sasaki D."/>
            <person name="Tomaru Y."/>
            <person name="Fukuda S."/>
            <person name="Kanamori-Katayama M."/>
            <person name="Suzuki M."/>
            <person name="Aoki J."/>
            <person name="Arakawa T."/>
            <person name="Iida J."/>
            <person name="Imamura K."/>
            <person name="Itoh M."/>
            <person name="Kato T."/>
            <person name="Kawaji H."/>
            <person name="Kawagashira N."/>
            <person name="Kawashima T."/>
            <person name="Kojima M."/>
            <person name="Kondo S."/>
            <person name="Konno H."/>
            <person name="Nakano K."/>
            <person name="Ninomiya N."/>
            <person name="Nishio T."/>
            <person name="Okada M."/>
            <person name="Plessy C."/>
            <person name="Shibata K."/>
            <person name="Shiraki T."/>
            <person name="Suzuki S."/>
            <person name="Tagami M."/>
            <person name="Waki K."/>
            <person name="Watahiki A."/>
            <person name="Okamura-Oho Y."/>
            <person name="Suzuki H."/>
            <person name="Kawai J."/>
            <person name="Hayashizaki Y."/>
        </authorList>
    </citation>
    <scope>NUCLEOTIDE SEQUENCE [LARGE SCALE MRNA]</scope>
    <source>
        <strain>C57BL/6J</strain>
        <tissue>Bone</tissue>
        <tissue>Cervix squamous cell</tissue>
        <tissue>Embryo</tissue>
        <tissue>Embryonic stem cell</tissue>
        <tissue>Head</tissue>
        <tissue>Skin</tissue>
        <tissue>Testis</tissue>
    </source>
</reference>
<reference key="3">
    <citation type="journal article" date="2009" name="PLoS Biol.">
        <title>Lineage-specific biology revealed by a finished genome assembly of the mouse.</title>
        <authorList>
            <person name="Church D.M."/>
            <person name="Goodstadt L."/>
            <person name="Hillier L.W."/>
            <person name="Zody M.C."/>
            <person name="Goldstein S."/>
            <person name="She X."/>
            <person name="Bult C.J."/>
            <person name="Agarwala R."/>
            <person name="Cherry J.L."/>
            <person name="DiCuccio M."/>
            <person name="Hlavina W."/>
            <person name="Kapustin Y."/>
            <person name="Meric P."/>
            <person name="Maglott D."/>
            <person name="Birtle Z."/>
            <person name="Marques A.C."/>
            <person name="Graves T."/>
            <person name="Zhou S."/>
            <person name="Teague B."/>
            <person name="Potamousis K."/>
            <person name="Churas C."/>
            <person name="Place M."/>
            <person name="Herschleb J."/>
            <person name="Runnheim R."/>
            <person name="Forrest D."/>
            <person name="Amos-Landgraf J."/>
            <person name="Schwartz D.C."/>
            <person name="Cheng Z."/>
            <person name="Lindblad-Toh K."/>
            <person name="Eichler E.E."/>
            <person name="Ponting C.P."/>
        </authorList>
    </citation>
    <scope>NUCLEOTIDE SEQUENCE [LARGE SCALE GENOMIC DNA]</scope>
    <source>
        <strain>C57BL/6J</strain>
    </source>
</reference>
<reference key="4">
    <citation type="journal article" date="2004" name="Genome Res.">
        <title>The status, quality, and expansion of the NIH full-length cDNA project: the Mammalian Gene Collection (MGC).</title>
        <authorList>
            <consortium name="The MGC Project Team"/>
        </authorList>
    </citation>
    <scope>NUCLEOTIDE SEQUENCE [LARGE SCALE MRNA]</scope>
    <source>
        <strain>Czech II</strain>
        <tissue>Brain</tissue>
        <tissue>Mammary gland</tissue>
    </source>
</reference>
<organism>
    <name type="scientific">Mus musculus</name>
    <name type="common">Mouse</name>
    <dbReference type="NCBI Taxonomy" id="10090"/>
    <lineage>
        <taxon>Eukaryota</taxon>
        <taxon>Metazoa</taxon>
        <taxon>Chordata</taxon>
        <taxon>Craniata</taxon>
        <taxon>Vertebrata</taxon>
        <taxon>Euteleostomi</taxon>
        <taxon>Mammalia</taxon>
        <taxon>Eutheria</taxon>
        <taxon>Euarchontoglires</taxon>
        <taxon>Glires</taxon>
        <taxon>Rodentia</taxon>
        <taxon>Myomorpha</taxon>
        <taxon>Muroidea</taxon>
        <taxon>Muridae</taxon>
        <taxon>Murinae</taxon>
        <taxon>Mus</taxon>
        <taxon>Mus</taxon>
    </lineage>
</organism>
<accession>Q8CFG0</accession>
<accession>B2RUD5</accession>
<accession>Q3TNM3</accession>
<accession>Q8BM68</accession>
<accession>Q8BUZ4</accession>
<accession>Q8BX28</accession>
<accession>Q8BZ51</accession>
<accession>Q8C169</accession>
<accession>Q9D8E2</accession>
<keyword id="KW-0106">Calcium</keyword>
<keyword id="KW-0256">Endoplasmic reticulum</keyword>
<keyword id="KW-0325">Glycoprotein</keyword>
<keyword id="KW-0333">Golgi apparatus</keyword>
<keyword id="KW-0378">Hydrolase</keyword>
<keyword id="KW-0479">Metal-binding</keyword>
<keyword id="KW-0654">Proteoglycan</keyword>
<keyword id="KW-1185">Reference proteome</keyword>
<keyword id="KW-0964">Secreted</keyword>
<keyword id="KW-0732">Signal</keyword>
<name>SULF2_MOUSE</name>
<gene>
    <name type="primary">Sulf2</name>
</gene>
<comment type="function">
    <text evidence="2">Exhibits arylsulfatase activity and highly specific endoglucosamine-6-sulfatase activity (By similarity). It can remove sulfate from the C-6 position of glucosamine within specific subregions of intact heparin (By similarity).</text>
</comment>
<comment type="catalytic activity">
    <reaction evidence="2">
        <text>an aryl sulfate + H2O = a phenol + sulfate + H(+)</text>
        <dbReference type="Rhea" id="RHEA:17261"/>
        <dbReference type="ChEBI" id="CHEBI:15377"/>
        <dbReference type="ChEBI" id="CHEBI:15378"/>
        <dbReference type="ChEBI" id="CHEBI:16189"/>
        <dbReference type="ChEBI" id="CHEBI:33853"/>
        <dbReference type="ChEBI" id="CHEBI:140317"/>
        <dbReference type="EC" id="3.1.6.1"/>
    </reaction>
</comment>
<comment type="catalytic activity">
    <reaction evidence="2">
        <text>Hydrolysis of the 6-sulfate groups of the N-acetyl-D-glucosamine 6-sulfate units of heparan sulfate and keratan sulfate.</text>
        <dbReference type="EC" id="3.1.6.14"/>
    </reaction>
</comment>
<comment type="cofactor">
    <cofactor evidence="1">
        <name>Ca(2+)</name>
        <dbReference type="ChEBI" id="CHEBI:29108"/>
    </cofactor>
    <text evidence="1">Binds 1 Ca(2+) ion per subunit.</text>
</comment>
<comment type="subcellular location">
    <subcellularLocation>
        <location evidence="3">Endoplasmic reticulum</location>
    </subcellularLocation>
    <subcellularLocation>
        <location evidence="3">Golgi apparatus</location>
        <location evidence="3">Golgi stack</location>
    </subcellularLocation>
    <subcellularLocation>
        <location evidence="6">Cell surface</location>
    </subcellularLocation>
</comment>
<comment type="subcellular location">
    <molecule>Extracellular sulfatase Sulf-2 secreted form</molecule>
    <subcellularLocation>
        <location evidence="6">Secreted</location>
    </subcellularLocation>
</comment>
<comment type="PTM">
    <text evidence="6">Processing by furin produces a secreted form.</text>
</comment>
<comment type="PTM">
    <text evidence="2">Glycosylation at Ser-588 negatively regulates its N-acetylglucosamine-6-sulfatase and arylsulfatase activities.</text>
</comment>
<comment type="PTM">
    <text evidence="1">The conversion to 3-oxoalanine (also known as C-formylglycine, FGly), of a serine or cysteine residue in prokaryotes and of a cysteine residue in eukaryotes, is critical for catalytic activity.</text>
</comment>
<comment type="similarity">
    <text evidence="8">Belongs to the sulfatase family.</text>
</comment>
<comment type="sequence caution" evidence="8">
    <conflict type="erroneous initiation">
        <sequence resource="EMBL-CDS" id="BAB25464"/>
    </conflict>
    <text>Truncated N-terminus.</text>
</comment>
<sequence>MAPPGLPLWLLSTALLSLLAGSSAFLSHPRLKGRFQRDRRNIRPNIILVLTDDQDVELGSMQVMNKTRRIMEQGGAHFINAFVTTPMCCPSRSSILTGKYVHNHNTYTNNENCSSPSWQAQHESRTFAVYLNSTGYRTAFFGKYLNEYNGSYVPPGWKEWVGLLKNSRFYNYTLCRNGVKEKHGSDYSTDYLTDLITNDSVSFFRTSKKMYPHRPVLMVISHAAPHGPEDSAPQYSRLFPNASQHITPSYNYAPNPDKHWIMRYTGPMKPIHMEFTNMLQRKRLQTLMSVDDSMETIYDMLVETGELDNTYILYTADHGYHIGQFGLVKGKSMPYEFDIRVPFYVRGPNVEAGSLNPHIVLNIDLAPTILDIAGLDIPADMDGKSILKLLDSERPVNRFHLKKKLRVWRDSFLVERGKLLHKREGDKVNAQEENFLPKYQRVKDLCQRAEYQTACEQLGQKWQCVEDASGTLKLHKCKGPMRFGGGGGSRALSNLVPKYDGQSSEACSCDSGGGGDYKLGLAGRRKLFKKKYKTSYARNRSIRSVAIEVDGEIYHVGLDTVPQPRNLSKPHWPGAPEDQDDKDGGSFSGTGGLPDYSAPNPIKVTHRCYILENDTVQCDLDLYKSLQAWKDHKLHIDHEIETLQNKIKNLREVRGHLKKKRPEECDCHRISYHSQHKGRLKHKGSSLHPFRKGLQEKDKVWLLREQKRKKKLRKLLKRLQNNDTCSMPGLTCFTHDNHHWQTAPLWTLGPFCACTSANNNTYWCLRTINETHNFLFCEFATGFIEYFDLSTDPYQLMNAVNTLDRDVLNQLHVQLMELRSCKGYKQCNPRTRNMDLGLRDGGSYEQYRQFQRRKWPEMKRPSSKSLGQLWEGWEG</sequence>
<feature type="signal peptide" evidence="4">
    <location>
        <begin position="1"/>
        <end position="24"/>
    </location>
</feature>
<feature type="chain" id="PRO_0000033441" description="Extracellular sulfatase Sulf-2">
    <location>
        <begin position="25"/>
        <end position="875"/>
    </location>
</feature>
<feature type="chain" id="PRO_0000457760" description="Extracellular sulfatase Sulf-2 secreted form" evidence="2">
    <location>
        <begin position="544"/>
        <end position="875"/>
    </location>
</feature>
<feature type="region of interest" description="Catalytic domain; necessary for arylsulfatase activity" evidence="2">
    <location>
        <begin position="1"/>
        <end position="415"/>
    </location>
</feature>
<feature type="region of interest" description="Hydrophilic domain; necessary for endoglucosamine-6-sulfatase activity" evidence="2">
    <location>
        <begin position="416"/>
        <end position="720"/>
    </location>
</feature>
<feature type="region of interest" description="Disordered" evidence="5">
    <location>
        <begin position="560"/>
        <end position="595"/>
    </location>
</feature>
<feature type="active site" description="Nucleophile" evidence="1">
    <location>
        <position position="88"/>
    </location>
</feature>
<feature type="binding site" evidence="1">
    <location>
        <position position="52"/>
    </location>
    <ligand>
        <name>Ca(2+)</name>
        <dbReference type="ChEBI" id="CHEBI:29108"/>
    </ligand>
</feature>
<feature type="binding site" evidence="1">
    <location>
        <position position="53"/>
    </location>
    <ligand>
        <name>Ca(2+)</name>
        <dbReference type="ChEBI" id="CHEBI:29108"/>
    </ligand>
</feature>
<feature type="binding site" description="via 3-oxoalanine" evidence="1">
    <location>
        <position position="88"/>
    </location>
    <ligand>
        <name>Ca(2+)</name>
        <dbReference type="ChEBI" id="CHEBI:29108"/>
    </ligand>
</feature>
<feature type="binding site" evidence="1">
    <location>
        <position position="317"/>
    </location>
    <ligand>
        <name>Ca(2+)</name>
        <dbReference type="ChEBI" id="CHEBI:29108"/>
    </ligand>
</feature>
<feature type="binding site" evidence="1">
    <location>
        <position position="318"/>
    </location>
    <ligand>
        <name>Ca(2+)</name>
        <dbReference type="ChEBI" id="CHEBI:29108"/>
    </ligand>
</feature>
<feature type="site" description="Cleavage; by furin" evidence="2">
    <location>
        <begin position="543"/>
        <end position="544"/>
    </location>
</feature>
<feature type="modified residue" description="3-oxoalanine (Cys)" evidence="1">
    <location>
        <position position="88"/>
    </location>
</feature>
<feature type="glycosylation site" description="N-linked (GlcNAc...) asparagine" evidence="4">
    <location>
        <position position="65"/>
    </location>
</feature>
<feature type="glycosylation site" description="N-linked (GlcNAc...) asparagine" evidence="4">
    <location>
        <position position="112"/>
    </location>
</feature>
<feature type="glycosylation site" description="N-linked (GlcNAc...) asparagine" evidence="4">
    <location>
        <position position="132"/>
    </location>
</feature>
<feature type="glycosylation site" description="N-linked (GlcNAc...) asparagine" evidence="4">
    <location>
        <position position="149"/>
    </location>
</feature>
<feature type="glycosylation site" description="N-linked (GlcNAc...) asparagine" evidence="4">
    <location>
        <position position="171"/>
    </location>
</feature>
<feature type="glycosylation site" description="N-linked (GlcNAc...) asparagine" evidence="4">
    <location>
        <position position="198"/>
    </location>
</feature>
<feature type="glycosylation site" description="N-linked (GlcNAc...) asparagine" evidence="4">
    <location>
        <position position="241"/>
    </location>
</feature>
<feature type="glycosylation site" description="N-linked (GlcNAc...) asparagine" evidence="4">
    <location>
        <position position="539"/>
    </location>
</feature>
<feature type="glycosylation site" description="N-linked (GlcNAc...) asparagine" evidence="4">
    <location>
        <position position="566"/>
    </location>
</feature>
<feature type="glycosylation site" description="O-linked (Xyl...) (chondroitin sulfate) serine" evidence="2">
    <location>
        <position position="588"/>
    </location>
</feature>
<feature type="glycosylation site" description="N-linked (GlcNAc...) asparagine" evidence="4">
    <location>
        <position position="613"/>
    </location>
</feature>
<feature type="glycosylation site" description="N-linked (GlcNAc...) asparagine" evidence="4">
    <location>
        <position position="722"/>
    </location>
</feature>
<feature type="glycosylation site" description="N-linked (GlcNAc...) asparagine" evidence="4">
    <location>
        <position position="759"/>
    </location>
</feature>
<feature type="glycosylation site" description="N-linked (GlcNAc...) asparagine" evidence="4">
    <location>
        <position position="769"/>
    </location>
</feature>
<feature type="sequence conflict" description="In Ref. 2; BAC38279." evidence="8" ref="2">
    <original>L</original>
    <variation>F</variation>
    <location>
        <position position="131"/>
    </location>
</feature>
<feature type="sequence conflict" description="In Ref. 2; BAC26165." evidence="8" ref="2">
    <original>Q</original>
    <variation>H</variation>
    <location>
        <position position="285"/>
    </location>
</feature>
<feature type="sequence conflict" description="In Ref. 2; BAC26165." evidence="8" ref="2">
    <original>T</original>
    <variation>A</variation>
    <location>
        <position position="534"/>
    </location>
</feature>
<feature type="sequence conflict" description="In Ref. 2; BAC26165." evidence="8" ref="2">
    <original>D</original>
    <variation>G</variation>
    <location>
        <position position="614"/>
    </location>
</feature>
<feature type="sequence conflict" description="In Ref. 1; AAM76862 and 4; AAH27238/AAI41087." evidence="8" ref="1 4">
    <original>R</original>
    <variation>K</variation>
    <location>
        <position position="669"/>
    </location>
</feature>
<protein>
    <recommendedName>
        <fullName>Extracellular sulfatase Sulf-2</fullName>
        <shortName>mSulf-2</shortName>
    </recommendedName>
    <alternativeName>
        <fullName>Arylsulfatase</fullName>
        <ecNumber evidence="2">3.1.6.1</ecNumber>
    </alternativeName>
    <alternativeName>
        <fullName>N-acetylglucosamine-6-sulfatase</fullName>
        <ecNumber evidence="2">3.1.6.14</ecNumber>
    </alternativeName>
    <component>
        <recommendedName>
            <fullName evidence="7">Extracellular sulfatase Sulf-2 secreted form</fullName>
        </recommendedName>
    </component>
</protein>
<dbReference type="EC" id="3.1.6.1" evidence="2"/>
<dbReference type="EC" id="3.1.6.14" evidence="2"/>
<dbReference type="EMBL" id="AY101177">
    <property type="protein sequence ID" value="AAM76862.1"/>
    <property type="molecule type" value="mRNA"/>
</dbReference>
<dbReference type="EMBL" id="AK008108">
    <property type="protein sequence ID" value="BAB25464.1"/>
    <property type="status" value="ALT_INIT"/>
    <property type="molecule type" value="mRNA"/>
</dbReference>
<dbReference type="EMBL" id="AK028874">
    <property type="protein sequence ID" value="BAC26165.1"/>
    <property type="molecule type" value="mRNA"/>
</dbReference>
<dbReference type="EMBL" id="AK034712">
    <property type="protein sequence ID" value="BAC28804.2"/>
    <property type="molecule type" value="mRNA"/>
</dbReference>
<dbReference type="EMBL" id="AK036685">
    <property type="protein sequence ID" value="BAC29534.1"/>
    <property type="molecule type" value="mRNA"/>
</dbReference>
<dbReference type="EMBL" id="AK049170">
    <property type="protein sequence ID" value="BAC33584.1"/>
    <property type="molecule type" value="mRNA"/>
</dbReference>
<dbReference type="EMBL" id="AK081643">
    <property type="protein sequence ID" value="BAC38279.1"/>
    <property type="molecule type" value="mRNA"/>
</dbReference>
<dbReference type="EMBL" id="AK133336">
    <property type="protein sequence ID" value="BAE21607.1"/>
    <property type="molecule type" value="mRNA"/>
</dbReference>
<dbReference type="EMBL" id="AK165183">
    <property type="protein sequence ID" value="BAE38065.1"/>
    <property type="molecule type" value="mRNA"/>
</dbReference>
<dbReference type="EMBL" id="AL589873">
    <property type="status" value="NOT_ANNOTATED_CDS"/>
    <property type="molecule type" value="Genomic_DNA"/>
</dbReference>
<dbReference type="EMBL" id="BC027238">
    <property type="protein sequence ID" value="AAH27238.2"/>
    <property type="molecule type" value="mRNA"/>
</dbReference>
<dbReference type="EMBL" id="BC141086">
    <property type="protein sequence ID" value="AAI41087.1"/>
    <property type="molecule type" value="mRNA"/>
</dbReference>
<dbReference type="CCDS" id="CCDS17086.1"/>
<dbReference type="RefSeq" id="NP_001239507.1">
    <property type="nucleotide sequence ID" value="NM_001252578.1"/>
</dbReference>
<dbReference type="RefSeq" id="NP_001239508.1">
    <property type="nucleotide sequence ID" value="NM_001252579.1"/>
</dbReference>
<dbReference type="RefSeq" id="NP_001342548.1">
    <property type="nucleotide sequence ID" value="NM_001355619.1"/>
</dbReference>
<dbReference type="RefSeq" id="NP_082348.2">
    <property type="nucleotide sequence ID" value="NM_028072.5"/>
</dbReference>
<dbReference type="RefSeq" id="XP_006500272.1">
    <property type="nucleotide sequence ID" value="XM_006500209.5"/>
</dbReference>
<dbReference type="RefSeq" id="XP_006500274.1">
    <property type="nucleotide sequence ID" value="XM_006500211.4"/>
</dbReference>
<dbReference type="RefSeq" id="XP_017174757.1">
    <property type="nucleotide sequence ID" value="XM_017319268.1"/>
</dbReference>
<dbReference type="RefSeq" id="XP_030107960.1">
    <property type="nucleotide sequence ID" value="XM_030252100.1"/>
</dbReference>
<dbReference type="RefSeq" id="XP_030107961.1">
    <property type="nucleotide sequence ID" value="XM_030252101.1"/>
</dbReference>
<dbReference type="RefSeq" id="XP_036018478.1">
    <property type="nucleotide sequence ID" value="XM_036162585.1"/>
</dbReference>
<dbReference type="SMR" id="Q8CFG0"/>
<dbReference type="BioGRID" id="215112">
    <property type="interactions" value="3"/>
</dbReference>
<dbReference type="FunCoup" id="Q8CFG0">
    <property type="interactions" value="154"/>
</dbReference>
<dbReference type="STRING" id="10090.ENSMUSP00000104872"/>
<dbReference type="GlyConnect" id="2308">
    <property type="glycosylation" value="2 N-Linked glycans (3 sites)"/>
</dbReference>
<dbReference type="GlyCosmos" id="Q8CFG0">
    <property type="glycosylation" value="13 sites, 2 glycans"/>
</dbReference>
<dbReference type="GlyGen" id="Q8CFG0">
    <property type="glycosylation" value="14 sites, 7 N-linked glycans (6 sites)"/>
</dbReference>
<dbReference type="iPTMnet" id="Q8CFG0"/>
<dbReference type="PhosphoSitePlus" id="Q8CFG0"/>
<dbReference type="PaxDb" id="10090-ENSMUSP00000104872"/>
<dbReference type="ProteomicsDB" id="254609"/>
<dbReference type="Antibodypedia" id="1101">
    <property type="antibodies" value="335 antibodies from 33 providers"/>
</dbReference>
<dbReference type="Ensembl" id="ENSMUST00000088086.4">
    <property type="protein sequence ID" value="ENSMUSP00000085405.4"/>
    <property type="gene ID" value="ENSMUSG00000006800.15"/>
</dbReference>
<dbReference type="Ensembl" id="ENSMUST00000109249.9">
    <property type="protein sequence ID" value="ENSMUSP00000104872.3"/>
    <property type="gene ID" value="ENSMUSG00000006800.15"/>
</dbReference>
<dbReference type="Ensembl" id="ENSMUST00000146497.9">
    <property type="protein sequence ID" value="ENSMUSP00000154557.2"/>
    <property type="gene ID" value="ENSMUSG00000006800.15"/>
</dbReference>
<dbReference type="GeneID" id="72043"/>
<dbReference type="KEGG" id="mmu:72043"/>
<dbReference type="UCSC" id="uc008nyk.2">
    <property type="organism name" value="mouse"/>
</dbReference>
<dbReference type="AGR" id="MGI:1919293"/>
<dbReference type="CTD" id="55959"/>
<dbReference type="MGI" id="MGI:1919293">
    <property type="gene designation" value="Sulf2"/>
</dbReference>
<dbReference type="VEuPathDB" id="HostDB:ENSMUSG00000006800"/>
<dbReference type="eggNOG" id="KOG3731">
    <property type="taxonomic scope" value="Eukaryota"/>
</dbReference>
<dbReference type="GeneTree" id="ENSGT00940000159151"/>
<dbReference type="HOGENOM" id="CLU_006332_2_0_1"/>
<dbReference type="InParanoid" id="Q8CFG0"/>
<dbReference type="OMA" id="GEACACD"/>
<dbReference type="OrthoDB" id="96314at2759"/>
<dbReference type="PhylomeDB" id="Q8CFG0"/>
<dbReference type="TreeFam" id="TF313545"/>
<dbReference type="BioGRID-ORCS" id="72043">
    <property type="hits" value="3 hits in 80 CRISPR screens"/>
</dbReference>
<dbReference type="ChiTaRS" id="Sulf2">
    <property type="organism name" value="mouse"/>
</dbReference>
<dbReference type="PRO" id="PR:Q8CFG0"/>
<dbReference type="Proteomes" id="UP000000589">
    <property type="component" value="Chromosome 2"/>
</dbReference>
<dbReference type="RNAct" id="Q8CFG0">
    <property type="molecule type" value="protein"/>
</dbReference>
<dbReference type="Bgee" id="ENSMUSG00000006800">
    <property type="expression patterns" value="Expressed in embryonic post-anal tail and 281 other cell types or tissues"/>
</dbReference>
<dbReference type="ExpressionAtlas" id="Q8CFG0">
    <property type="expression patterns" value="baseline and differential"/>
</dbReference>
<dbReference type="GO" id="GO:0009986">
    <property type="term" value="C:cell surface"/>
    <property type="evidence" value="ECO:0000250"/>
    <property type="project" value="UniProtKB"/>
</dbReference>
<dbReference type="GO" id="GO:0005783">
    <property type="term" value="C:endoplasmic reticulum"/>
    <property type="evidence" value="ECO:0007669"/>
    <property type="project" value="UniProtKB-SubCell"/>
</dbReference>
<dbReference type="GO" id="GO:0005615">
    <property type="term" value="C:extracellular space"/>
    <property type="evidence" value="ECO:0000266"/>
    <property type="project" value="MGI"/>
</dbReference>
<dbReference type="GO" id="GO:0005795">
    <property type="term" value="C:Golgi stack"/>
    <property type="evidence" value="ECO:0007669"/>
    <property type="project" value="UniProtKB-SubCell"/>
</dbReference>
<dbReference type="GO" id="GO:0005886">
    <property type="term" value="C:plasma membrane"/>
    <property type="evidence" value="ECO:0000314"/>
    <property type="project" value="UniProtKB"/>
</dbReference>
<dbReference type="GO" id="GO:0004065">
    <property type="term" value="F:arylsulfatase activity"/>
    <property type="evidence" value="ECO:0000250"/>
    <property type="project" value="UniProtKB"/>
</dbReference>
<dbReference type="GO" id="GO:0005509">
    <property type="term" value="F:calcium ion binding"/>
    <property type="evidence" value="ECO:0007669"/>
    <property type="project" value="InterPro"/>
</dbReference>
<dbReference type="GO" id="GO:0008449">
    <property type="term" value="F:N-acetylglucosamine-6-sulfatase activity"/>
    <property type="evidence" value="ECO:0000315"/>
    <property type="project" value="UniProtKB"/>
</dbReference>
<dbReference type="GO" id="GO:0060348">
    <property type="term" value="P:bone development"/>
    <property type="evidence" value="ECO:0000316"/>
    <property type="project" value="BHF-UCL"/>
</dbReference>
<dbReference type="GO" id="GO:0051216">
    <property type="term" value="P:cartilage development"/>
    <property type="evidence" value="ECO:0000315"/>
    <property type="project" value="UniProtKB"/>
</dbReference>
<dbReference type="GO" id="GO:0002063">
    <property type="term" value="P:chondrocyte development"/>
    <property type="evidence" value="ECO:0000315"/>
    <property type="project" value="UniProtKB"/>
</dbReference>
<dbReference type="GO" id="GO:0048706">
    <property type="term" value="P:embryonic skeletal system development"/>
    <property type="evidence" value="ECO:0000316"/>
    <property type="project" value="UniProtKB"/>
</dbReference>
<dbReference type="GO" id="GO:0014846">
    <property type="term" value="P:esophagus smooth muscle contraction"/>
    <property type="evidence" value="ECO:0000316"/>
    <property type="project" value="UniProtKB"/>
</dbReference>
<dbReference type="GO" id="GO:0035860">
    <property type="term" value="P:glial cell-derived neurotrophic factor receptor signaling pathway"/>
    <property type="evidence" value="ECO:0000314"/>
    <property type="project" value="UniProtKB"/>
</dbReference>
<dbReference type="GO" id="GO:0032836">
    <property type="term" value="P:glomerular basement membrane development"/>
    <property type="evidence" value="ECO:0000316"/>
    <property type="project" value="UniProtKB"/>
</dbReference>
<dbReference type="GO" id="GO:0003094">
    <property type="term" value="P:glomerular filtration"/>
    <property type="evidence" value="ECO:0000316"/>
    <property type="project" value="UniProtKB"/>
</dbReference>
<dbReference type="GO" id="GO:0030201">
    <property type="term" value="P:heparan sulfate proteoglycan metabolic process"/>
    <property type="evidence" value="ECO:0000315"/>
    <property type="project" value="UniProtKB"/>
</dbReference>
<dbReference type="GO" id="GO:0060384">
    <property type="term" value="P:innervation"/>
    <property type="evidence" value="ECO:0000316"/>
    <property type="project" value="UniProtKB"/>
</dbReference>
<dbReference type="GO" id="GO:0001822">
    <property type="term" value="P:kidney development"/>
    <property type="evidence" value="ECO:0000316"/>
    <property type="project" value="BHF-UCL"/>
</dbReference>
<dbReference type="GO" id="GO:0097421">
    <property type="term" value="P:liver regeneration"/>
    <property type="evidence" value="ECO:0000315"/>
    <property type="project" value="MGI"/>
</dbReference>
<dbReference type="GO" id="GO:0040037">
    <property type="term" value="P:negative regulation of fibroblast growth factor receptor signaling pathway"/>
    <property type="evidence" value="ECO:0000316"/>
    <property type="project" value="UniProtKB"/>
</dbReference>
<dbReference type="GO" id="GO:0090263">
    <property type="term" value="P:positive regulation of canonical Wnt signaling pathway"/>
    <property type="evidence" value="ECO:0000315"/>
    <property type="project" value="MGI"/>
</dbReference>
<dbReference type="GO" id="GO:1904472">
    <property type="term" value="P:positive regulation of endothelin production"/>
    <property type="evidence" value="ECO:0007669"/>
    <property type="project" value="Ensembl"/>
</dbReference>
<dbReference type="GO" id="GO:0010575">
    <property type="term" value="P:positive regulation of vascular endothelial growth factor production"/>
    <property type="evidence" value="ECO:0000316"/>
    <property type="project" value="UniProtKB"/>
</dbReference>
<dbReference type="GO" id="GO:2000345">
    <property type="term" value="P:regulation of hepatocyte proliferation"/>
    <property type="evidence" value="ECO:0000315"/>
    <property type="project" value="MGI"/>
</dbReference>
<dbReference type="GO" id="GO:0009611">
    <property type="term" value="P:response to wounding"/>
    <property type="evidence" value="ECO:0000315"/>
    <property type="project" value="MGI"/>
</dbReference>
<dbReference type="GO" id="GO:0006790">
    <property type="term" value="P:sulfur compound metabolic process"/>
    <property type="evidence" value="ECO:0000266"/>
    <property type="project" value="MGI"/>
</dbReference>
<dbReference type="CDD" id="cd16147">
    <property type="entry name" value="G6S"/>
    <property type="match status" value="1"/>
</dbReference>
<dbReference type="FunFam" id="3.40.720.10:FF:000003">
    <property type="entry name" value="Extracellular sulfatase"/>
    <property type="match status" value="1"/>
</dbReference>
<dbReference type="Gene3D" id="3.40.720.10">
    <property type="entry name" value="Alkaline Phosphatase, subunit A"/>
    <property type="match status" value="1"/>
</dbReference>
<dbReference type="InterPro" id="IPR017850">
    <property type="entry name" value="Alkaline_phosphatase_core_sf"/>
</dbReference>
<dbReference type="InterPro" id="IPR014615">
    <property type="entry name" value="Extracellular_sulfatase"/>
</dbReference>
<dbReference type="InterPro" id="IPR024609">
    <property type="entry name" value="Extracellular_sulfatase_C"/>
</dbReference>
<dbReference type="InterPro" id="IPR024607">
    <property type="entry name" value="Sulfatase_CS"/>
</dbReference>
<dbReference type="InterPro" id="IPR000917">
    <property type="entry name" value="Sulfatase_N"/>
</dbReference>
<dbReference type="PANTHER" id="PTHR43108:SF4">
    <property type="entry name" value="EXTRACELLULAR SULFATASE SULF-2"/>
    <property type="match status" value="1"/>
</dbReference>
<dbReference type="PANTHER" id="PTHR43108">
    <property type="entry name" value="N-ACETYLGLUCOSAMINE-6-SULFATASE FAMILY MEMBER"/>
    <property type="match status" value="1"/>
</dbReference>
<dbReference type="Pfam" id="PF12548">
    <property type="entry name" value="DUF3740"/>
    <property type="match status" value="1"/>
</dbReference>
<dbReference type="Pfam" id="PF00884">
    <property type="entry name" value="Sulfatase"/>
    <property type="match status" value="1"/>
</dbReference>
<dbReference type="PIRSF" id="PIRSF036665">
    <property type="entry name" value="Sulf1"/>
    <property type="match status" value="1"/>
</dbReference>
<dbReference type="SUPFAM" id="SSF53649">
    <property type="entry name" value="Alkaline phosphatase-like"/>
    <property type="match status" value="2"/>
</dbReference>
<dbReference type="PROSITE" id="PS00523">
    <property type="entry name" value="SULFATASE_1"/>
    <property type="match status" value="1"/>
</dbReference>